<sequence>MHLRLLMSTVITATLIVSNNALTSPSDKTKTRALRGASTVGIAADNLLAAHFSPTLKHKESRGDYNNIQTERHRKRRLYDAPHHPEFYDIAVHQVPSDKSYGGGPAIAIFAGVAATFILIDYLIRHFTEN</sequence>
<feature type="signal peptide" evidence="1">
    <location>
        <begin position="1"/>
        <end position="21"/>
    </location>
</feature>
<feature type="chain" id="PRO_5007999407" description="Secreted RxLR effector protein 66">
    <location>
        <begin position="22"/>
        <end position="130"/>
    </location>
</feature>
<feature type="transmembrane region" description="Helical" evidence="1">
    <location>
        <begin position="104"/>
        <end position="124"/>
    </location>
</feature>
<feature type="short sequence motif" description="RxLR-dEER" evidence="5">
    <location>
        <begin position="32"/>
        <end position="62"/>
    </location>
</feature>
<name>RLR66_PLAVT</name>
<proteinExistence type="evidence at transcript level"/>
<accession>A0A172M476</accession>
<comment type="function">
    <text evidence="2">Effector that acts as a broad suppressor of cell death to interrupt plant immunity. Inhibits cell death induced by cell death-inducing proteins, including the PAMP elicitor INF1 from P.infestans.</text>
</comment>
<comment type="subcellular location">
    <subcellularLocation>
        <location evidence="2">Secreted</location>
    </subcellularLocation>
    <subcellularLocation>
        <location evidence="2">Host cytoplasm</location>
    </subcellularLocation>
    <subcellularLocation>
        <location evidence="2">Host nucleus</location>
    </subcellularLocation>
    <subcellularLocation>
        <location evidence="1">Membrane</location>
        <topology evidence="1">Single-pass membrane protein</topology>
    </subcellularLocation>
</comment>
<comment type="induction">
    <text evidence="2">Expression is up-regulated at later stages of infection.</text>
</comment>
<comment type="domain">
    <text evidence="5">The RxLR-dEER motif acts to carry the protein into the host cell cytoplasm through binding to cell surface phosphatidylinositol-3-phosphate.</text>
</comment>
<comment type="similarity">
    <text evidence="4">Belongs to the RxLR effector family.</text>
</comment>
<reference key="1">
    <citation type="journal article" date="2016" name="Front. Microbiol.">
        <title>Studying the mechanism of Plasmopara viticola RxLR effectors on suppressing plant immunity.</title>
        <authorList>
            <person name="Xiang J."/>
            <person name="Li X."/>
            <person name="Wu J."/>
            <person name="Yin L."/>
            <person name="Zhang Y."/>
            <person name="Lu J."/>
        </authorList>
    </citation>
    <scope>NUCLEOTIDE SEQUENCE [MRNA]</scope>
    <scope>INDUCTION</scope>
    <scope>FUNCTION</scope>
    <scope>SUBCELLULAR LOCATION</scope>
    <scope>DOMAIN</scope>
    <source>
        <strain>ZJ-1-1</strain>
    </source>
</reference>
<protein>
    <recommendedName>
        <fullName evidence="3">Secreted RxLR effector protein 66</fullName>
    </recommendedName>
</protein>
<organism>
    <name type="scientific">Plasmopara viticola</name>
    <name type="common">Downy mildew of grapevine</name>
    <name type="synonym">Botrytis viticola</name>
    <dbReference type="NCBI Taxonomy" id="143451"/>
    <lineage>
        <taxon>Eukaryota</taxon>
        <taxon>Sar</taxon>
        <taxon>Stramenopiles</taxon>
        <taxon>Oomycota</taxon>
        <taxon>Peronosporales</taxon>
        <taxon>Peronosporaceae</taxon>
        <taxon>Plasmopara</taxon>
    </lineage>
</organism>
<keyword id="KW-1035">Host cytoplasm</keyword>
<keyword id="KW-1048">Host nucleus</keyword>
<keyword id="KW-0472">Membrane</keyword>
<keyword id="KW-0964">Secreted</keyword>
<keyword id="KW-0732">Signal</keyword>
<keyword id="KW-0812">Transmembrane</keyword>
<keyword id="KW-1133">Transmembrane helix</keyword>
<keyword id="KW-0843">Virulence</keyword>
<gene>
    <name evidence="3" type="primary">RxLR66</name>
</gene>
<dbReference type="EMBL" id="KX010966">
    <property type="protein sequence ID" value="ANC73386.1"/>
    <property type="molecule type" value="mRNA"/>
</dbReference>
<dbReference type="GO" id="GO:0005576">
    <property type="term" value="C:extracellular region"/>
    <property type="evidence" value="ECO:0007669"/>
    <property type="project" value="UniProtKB-SubCell"/>
</dbReference>
<dbReference type="GO" id="GO:0030430">
    <property type="term" value="C:host cell cytoplasm"/>
    <property type="evidence" value="ECO:0007669"/>
    <property type="project" value="UniProtKB-SubCell"/>
</dbReference>
<dbReference type="GO" id="GO:0042025">
    <property type="term" value="C:host cell nucleus"/>
    <property type="evidence" value="ECO:0007669"/>
    <property type="project" value="UniProtKB-SubCell"/>
</dbReference>
<dbReference type="GO" id="GO:0016020">
    <property type="term" value="C:membrane"/>
    <property type="evidence" value="ECO:0007669"/>
    <property type="project" value="UniProtKB-SubCell"/>
</dbReference>
<evidence type="ECO:0000255" key="1"/>
<evidence type="ECO:0000269" key="2">
    <source>
    </source>
</evidence>
<evidence type="ECO:0000303" key="3">
    <source>
    </source>
</evidence>
<evidence type="ECO:0000305" key="4"/>
<evidence type="ECO:0000305" key="5">
    <source>
    </source>
</evidence>